<keyword id="KW-1038">Host endoplasmic reticulum</keyword>
<keyword id="KW-1043">Host membrane</keyword>
<keyword id="KW-0472">Membrane</keyword>
<keyword id="KW-0812">Transmembrane</keyword>
<keyword id="KW-1133">Transmembrane helix</keyword>
<keyword id="KW-0813">Transport</keyword>
<keyword id="KW-0916">Viral movement protein</keyword>
<feature type="chain" id="PRO_0000222614" description="Movement protein TGBp3">
    <location>
        <begin position="1"/>
        <end position="64"/>
    </location>
</feature>
<feature type="topological domain" description="Lumenal" evidence="2">
    <location>
        <begin position="1"/>
        <end position="4"/>
    </location>
</feature>
<feature type="transmembrane region" description="Helical" evidence="2">
    <location>
        <begin position="5"/>
        <end position="27"/>
    </location>
</feature>
<feature type="topological domain" description="Cytoplasmic" evidence="2">
    <location>
        <begin position="28"/>
        <end position="64"/>
    </location>
</feature>
<comment type="function">
    <text evidence="1">Plays a role in viral cell-to-cell propagation, by facilitating genome transport to neighboring plant cells through plasmosdesmata. May induce the formation of granular vesicles derived from the Endoplasmic reticulum, which align on actin filaments (By similarity).</text>
</comment>
<comment type="subcellular location">
    <subcellularLocation>
        <location evidence="1">Host endoplasmic reticulum membrane</location>
    </subcellularLocation>
</comment>
<comment type="miscellaneous">
    <text>TGBp1, TGBp2 and TGBp3 seem to act together for cell-to-cell propagation. TGBp1 is the main movement protein that physically cross the plasmodesma with the viral genome. TGBp2 and TGBp3 would facilitate TGBp1 function.</text>
</comment>
<comment type="similarity">
    <text evidence="3">Belongs to the Tymovirales TGBp3 protein family.</text>
</comment>
<sequence length="64" mass="6960">MRSVALTLCAIIAGYLLVSNLQNVFSPEVCTLVITGESIRINGCNLSPAHFRAISHLKVLQIHL</sequence>
<dbReference type="EMBL" id="X15343">
    <property type="protein sequence ID" value="CAA33400.1"/>
    <property type="molecule type" value="Genomic_RNA"/>
</dbReference>
<dbReference type="GO" id="GO:0044167">
    <property type="term" value="C:host cell endoplasmic reticulum membrane"/>
    <property type="evidence" value="ECO:0007669"/>
    <property type="project" value="UniProtKB-SubCell"/>
</dbReference>
<dbReference type="GO" id="GO:0016020">
    <property type="term" value="C:membrane"/>
    <property type="evidence" value="ECO:0007669"/>
    <property type="project" value="UniProtKB-KW"/>
</dbReference>
<dbReference type="GO" id="GO:0046740">
    <property type="term" value="P:transport of virus in host, cell to cell"/>
    <property type="evidence" value="ECO:0007669"/>
    <property type="project" value="UniProtKB-KW"/>
</dbReference>
<dbReference type="InterPro" id="IPR003411">
    <property type="entry name" value="TGBp3"/>
</dbReference>
<dbReference type="Pfam" id="PF02495">
    <property type="entry name" value="TGBp3"/>
    <property type="match status" value="1"/>
</dbReference>
<name>TGB3_LSV</name>
<protein>
    <recommendedName>
        <fullName>Movement protein TGBp3</fullName>
    </recommendedName>
    <alternativeName>
        <fullName>7 kDa protein</fullName>
    </alternativeName>
    <alternativeName>
        <fullName>Triple gene block 3 protein</fullName>
        <shortName>TGBp3</shortName>
    </alternativeName>
</protein>
<organism>
    <name type="scientific">Lily symptomless virus</name>
    <name type="common">LSV</name>
    <dbReference type="NCBI Taxonomy" id="12173"/>
    <lineage>
        <taxon>Viruses</taxon>
        <taxon>Riboviria</taxon>
        <taxon>Orthornavirae</taxon>
        <taxon>Kitrinoviricota</taxon>
        <taxon>Alsuviricetes</taxon>
        <taxon>Tymovirales</taxon>
        <taxon>Betaflexiviridae</taxon>
        <taxon>Quinvirinae</taxon>
        <taxon>Carlavirus</taxon>
    </lineage>
</organism>
<proteinExistence type="inferred from homology"/>
<reference key="1">
    <citation type="journal article" date="1990" name="J. Gen. Virol.">
        <title>Homologies between the genomes of a carlavirus (lily symptomless virus) and a potexvirus (lily virus X) from lily plants.</title>
        <authorList>
            <person name="Memelink J."/>
            <person name="van der Vlugt C.I.M."/>
            <person name="Linthorst H.J.M."/>
            <person name="Derks A.F.L.M."/>
            <person name="Asjes C.J."/>
            <person name="Bol J.F."/>
        </authorList>
    </citation>
    <scope>NUCLEOTIDE SEQUENCE [GENOMIC RNA]</scope>
</reference>
<accession>P27333</accession>
<organismHost>
    <name type="scientific">Lilium</name>
    <dbReference type="NCBI Taxonomy" id="4688"/>
</organismHost>
<gene>
    <name type="ORF">ORF4</name>
</gene>
<evidence type="ECO:0000250" key="1"/>
<evidence type="ECO:0000255" key="2"/>
<evidence type="ECO:0000305" key="3"/>